<reference key="1">
    <citation type="journal article" date="2008" name="J. Bacteriol.">
        <title>Genome sequence of Staphylococcus aureus strain Newman and comparative analysis of staphylococcal genomes: polymorphism and evolution of two major pathogenicity islands.</title>
        <authorList>
            <person name="Baba T."/>
            <person name="Bae T."/>
            <person name="Schneewind O."/>
            <person name="Takeuchi F."/>
            <person name="Hiramatsu K."/>
        </authorList>
    </citation>
    <scope>NUCLEOTIDE SEQUENCE [LARGE SCALE GENOMIC DNA]</scope>
    <source>
        <strain>Newman</strain>
    </source>
</reference>
<proteinExistence type="inferred from homology"/>
<gene>
    <name evidence="1" type="primary">mtnN</name>
    <name type="ordered locus">NWMN_1501</name>
</gene>
<feature type="chain" id="PRO_0000359373" description="5'-methylthioadenosine/S-adenosylhomocysteine nucleosidase">
    <location>
        <begin position="1"/>
        <end position="228"/>
    </location>
</feature>
<feature type="active site" description="Proton acceptor" evidence="1">
    <location>
        <position position="11"/>
    </location>
</feature>
<feature type="active site" description="Proton donor" evidence="1">
    <location>
        <position position="196"/>
    </location>
</feature>
<feature type="binding site" evidence="1">
    <location>
        <position position="77"/>
    </location>
    <ligand>
        <name>substrate</name>
    </ligand>
</feature>
<feature type="binding site" evidence="1">
    <location>
        <position position="151"/>
    </location>
    <ligand>
        <name>substrate</name>
    </ligand>
</feature>
<feature type="binding site" evidence="1">
    <location>
        <begin position="172"/>
        <end position="173"/>
    </location>
    <ligand>
        <name>substrate</name>
    </ligand>
</feature>
<comment type="function">
    <text evidence="1">Catalyzes the irreversible cleavage of the glycosidic bond in both 5'-methylthioadenosine (MTA) and S-adenosylhomocysteine (SAH/AdoHcy) to adenine and the corresponding thioribose, 5'-methylthioribose and S-ribosylhomocysteine, respectively. Also cleaves 5'-deoxyadenosine, a toxic by-product of radical S-adenosylmethionine (SAM) enzymes, into 5-deoxyribose and adenine.</text>
</comment>
<comment type="catalytic activity">
    <reaction evidence="1">
        <text>S-adenosyl-L-homocysteine + H2O = S-(5-deoxy-D-ribos-5-yl)-L-homocysteine + adenine</text>
        <dbReference type="Rhea" id="RHEA:17805"/>
        <dbReference type="ChEBI" id="CHEBI:15377"/>
        <dbReference type="ChEBI" id="CHEBI:16708"/>
        <dbReference type="ChEBI" id="CHEBI:57856"/>
        <dbReference type="ChEBI" id="CHEBI:58195"/>
        <dbReference type="EC" id="3.2.2.9"/>
    </reaction>
</comment>
<comment type="catalytic activity">
    <reaction evidence="1">
        <text>S-methyl-5'-thioadenosine + H2O = 5-(methylsulfanyl)-D-ribose + adenine</text>
        <dbReference type="Rhea" id="RHEA:13617"/>
        <dbReference type="ChEBI" id="CHEBI:15377"/>
        <dbReference type="ChEBI" id="CHEBI:16708"/>
        <dbReference type="ChEBI" id="CHEBI:17509"/>
        <dbReference type="ChEBI" id="CHEBI:78440"/>
        <dbReference type="EC" id="3.2.2.9"/>
    </reaction>
</comment>
<comment type="catalytic activity">
    <reaction evidence="1">
        <text>5'-deoxyadenosine + H2O = 5-deoxy-D-ribose + adenine</text>
        <dbReference type="Rhea" id="RHEA:29859"/>
        <dbReference type="ChEBI" id="CHEBI:15377"/>
        <dbReference type="ChEBI" id="CHEBI:16708"/>
        <dbReference type="ChEBI" id="CHEBI:17319"/>
        <dbReference type="ChEBI" id="CHEBI:149540"/>
        <dbReference type="EC" id="3.2.2.9"/>
    </reaction>
    <physiologicalReaction direction="left-to-right" evidence="1">
        <dbReference type="Rhea" id="RHEA:29860"/>
    </physiologicalReaction>
</comment>
<comment type="pathway">
    <text evidence="1">Amino-acid biosynthesis; L-methionine biosynthesis via salvage pathway; S-methyl-5-thio-alpha-D-ribose 1-phosphate from S-methyl-5'-thioadenosine (hydrolase route): step 1/2.</text>
</comment>
<comment type="similarity">
    <text evidence="1">Belongs to the PNP/UDP phosphorylase family. MtnN subfamily.</text>
</comment>
<sequence>MIGIIGAMEEEVTILKNKLTQLSEISVAHVKFYTGILKDREVVITQSGIGKVNAAISTTLLINKFKPDVIINTGSAGALDESLNVGDVLISDDVKYHDADATAFGYEYGQIPQMPVAFQSSKPLIEKVSQVVQQQQLTAKVGLIVSGDSFIGSVEQRQKIKKAFPNAMAVEMEATAIAQTCYQFNVPFVVVRAVSDLANGEAEMSFEAFLEKAAVSSSQTVEALVSQL</sequence>
<organism>
    <name type="scientific">Staphylococcus aureus (strain Newman)</name>
    <dbReference type="NCBI Taxonomy" id="426430"/>
    <lineage>
        <taxon>Bacteria</taxon>
        <taxon>Bacillati</taxon>
        <taxon>Bacillota</taxon>
        <taxon>Bacilli</taxon>
        <taxon>Bacillales</taxon>
        <taxon>Staphylococcaceae</taxon>
        <taxon>Staphylococcus</taxon>
    </lineage>
</organism>
<dbReference type="EC" id="3.2.2.9" evidence="1"/>
<dbReference type="EMBL" id="AP009351">
    <property type="protein sequence ID" value="BAF67773.1"/>
    <property type="molecule type" value="Genomic_DNA"/>
</dbReference>
<dbReference type="RefSeq" id="WP_000579275.1">
    <property type="nucleotide sequence ID" value="NZ_JBBIAE010000001.1"/>
</dbReference>
<dbReference type="SMR" id="A6QHE1"/>
<dbReference type="KEGG" id="sae:NWMN_1501"/>
<dbReference type="HOGENOM" id="CLU_031248_2_2_9"/>
<dbReference type="UniPathway" id="UPA00904">
    <property type="reaction ID" value="UER00871"/>
</dbReference>
<dbReference type="Proteomes" id="UP000006386">
    <property type="component" value="Chromosome"/>
</dbReference>
<dbReference type="GO" id="GO:0005829">
    <property type="term" value="C:cytosol"/>
    <property type="evidence" value="ECO:0007669"/>
    <property type="project" value="TreeGrafter"/>
</dbReference>
<dbReference type="GO" id="GO:0008782">
    <property type="term" value="F:adenosylhomocysteine nucleosidase activity"/>
    <property type="evidence" value="ECO:0007669"/>
    <property type="project" value="UniProtKB-UniRule"/>
</dbReference>
<dbReference type="GO" id="GO:0008930">
    <property type="term" value="F:methylthioadenosine nucleosidase activity"/>
    <property type="evidence" value="ECO:0007669"/>
    <property type="project" value="UniProtKB-UniRule"/>
</dbReference>
<dbReference type="GO" id="GO:0019509">
    <property type="term" value="P:L-methionine salvage from methylthioadenosine"/>
    <property type="evidence" value="ECO:0007669"/>
    <property type="project" value="UniProtKB-UniRule"/>
</dbReference>
<dbReference type="GO" id="GO:0019284">
    <property type="term" value="P:L-methionine salvage from S-adenosylmethionine"/>
    <property type="evidence" value="ECO:0007669"/>
    <property type="project" value="TreeGrafter"/>
</dbReference>
<dbReference type="GO" id="GO:0009164">
    <property type="term" value="P:nucleoside catabolic process"/>
    <property type="evidence" value="ECO:0007669"/>
    <property type="project" value="InterPro"/>
</dbReference>
<dbReference type="CDD" id="cd09008">
    <property type="entry name" value="MTAN"/>
    <property type="match status" value="1"/>
</dbReference>
<dbReference type="FunFam" id="3.40.50.1580:FF:000001">
    <property type="entry name" value="MTA/SAH nucleosidase family protein"/>
    <property type="match status" value="1"/>
</dbReference>
<dbReference type="Gene3D" id="3.40.50.1580">
    <property type="entry name" value="Nucleoside phosphorylase domain"/>
    <property type="match status" value="1"/>
</dbReference>
<dbReference type="HAMAP" id="MF_01684">
    <property type="entry name" value="Salvage_MtnN"/>
    <property type="match status" value="1"/>
</dbReference>
<dbReference type="InterPro" id="IPR010049">
    <property type="entry name" value="MTA_SAH_Nsdase"/>
</dbReference>
<dbReference type="InterPro" id="IPR000845">
    <property type="entry name" value="Nucleoside_phosphorylase_d"/>
</dbReference>
<dbReference type="InterPro" id="IPR035994">
    <property type="entry name" value="Nucleoside_phosphorylase_sf"/>
</dbReference>
<dbReference type="NCBIfam" id="TIGR01704">
    <property type="entry name" value="MTA_SAH-Nsdase"/>
    <property type="match status" value="1"/>
</dbReference>
<dbReference type="NCBIfam" id="NF004079">
    <property type="entry name" value="PRK05584.1"/>
    <property type="match status" value="1"/>
</dbReference>
<dbReference type="PANTHER" id="PTHR46832">
    <property type="entry name" value="5'-METHYLTHIOADENOSINE/S-ADENOSYLHOMOCYSTEINE NUCLEOSIDASE"/>
    <property type="match status" value="1"/>
</dbReference>
<dbReference type="PANTHER" id="PTHR46832:SF1">
    <property type="entry name" value="5'-METHYLTHIOADENOSINE_S-ADENOSYLHOMOCYSTEINE NUCLEOSIDASE"/>
    <property type="match status" value="1"/>
</dbReference>
<dbReference type="Pfam" id="PF01048">
    <property type="entry name" value="PNP_UDP_1"/>
    <property type="match status" value="1"/>
</dbReference>
<dbReference type="SUPFAM" id="SSF53167">
    <property type="entry name" value="Purine and uridine phosphorylases"/>
    <property type="match status" value="1"/>
</dbReference>
<evidence type="ECO:0000255" key="1">
    <source>
        <dbReference type="HAMAP-Rule" id="MF_01684"/>
    </source>
</evidence>
<name>MTNN_STAAE</name>
<protein>
    <recommendedName>
        <fullName evidence="1">5'-methylthioadenosine/S-adenosylhomocysteine nucleosidase</fullName>
        <shortName evidence="1">MTA/SAH nucleosidase</shortName>
        <shortName evidence="1">MTAN</shortName>
        <ecNumber evidence="1">3.2.2.9</ecNumber>
    </recommendedName>
    <alternativeName>
        <fullName evidence="1">5'-deoxyadenosine nucleosidase</fullName>
        <shortName evidence="1">DOA nucleosidase</shortName>
        <shortName evidence="1">dAdo nucleosidase</shortName>
    </alternativeName>
    <alternativeName>
        <fullName evidence="1">5'-methylthioadenosine nucleosidase</fullName>
        <shortName evidence="1">MTA nucleosidase</shortName>
    </alternativeName>
    <alternativeName>
        <fullName evidence="1">S-adenosylhomocysteine nucleosidase</fullName>
        <shortName evidence="1">AdoHcy nucleosidase</shortName>
        <shortName evidence="1">SAH nucleosidase</shortName>
        <shortName evidence="1">SRH nucleosidase</shortName>
    </alternativeName>
</protein>
<keyword id="KW-0028">Amino-acid biosynthesis</keyword>
<keyword id="KW-0378">Hydrolase</keyword>
<keyword id="KW-0486">Methionine biosynthesis</keyword>
<accession>A6QHE1</accession>